<dbReference type="EC" id="3.6.5.-" evidence="1"/>
<dbReference type="EMBL" id="CP000232">
    <property type="protein sequence ID" value="ABC18891.1"/>
    <property type="molecule type" value="Genomic_DNA"/>
</dbReference>
<dbReference type="RefSeq" id="YP_429434.1">
    <property type="nucleotide sequence ID" value="NC_007644.1"/>
</dbReference>
<dbReference type="SMR" id="Q2RKZ8"/>
<dbReference type="STRING" id="264732.Moth_0561"/>
<dbReference type="EnsemblBacteria" id="ABC18891">
    <property type="protein sequence ID" value="ABC18891"/>
    <property type="gene ID" value="Moth_0561"/>
</dbReference>
<dbReference type="KEGG" id="mta:Moth_0561"/>
<dbReference type="PATRIC" id="fig|264732.11.peg.604"/>
<dbReference type="eggNOG" id="COG0536">
    <property type="taxonomic scope" value="Bacteria"/>
</dbReference>
<dbReference type="HOGENOM" id="CLU_011747_2_0_9"/>
<dbReference type="OrthoDB" id="9807318at2"/>
<dbReference type="GO" id="GO:0005737">
    <property type="term" value="C:cytoplasm"/>
    <property type="evidence" value="ECO:0007669"/>
    <property type="project" value="UniProtKB-SubCell"/>
</dbReference>
<dbReference type="GO" id="GO:0005525">
    <property type="term" value="F:GTP binding"/>
    <property type="evidence" value="ECO:0007669"/>
    <property type="project" value="UniProtKB-UniRule"/>
</dbReference>
<dbReference type="GO" id="GO:0003924">
    <property type="term" value="F:GTPase activity"/>
    <property type="evidence" value="ECO:0007669"/>
    <property type="project" value="UniProtKB-UniRule"/>
</dbReference>
<dbReference type="GO" id="GO:0000287">
    <property type="term" value="F:magnesium ion binding"/>
    <property type="evidence" value="ECO:0007669"/>
    <property type="project" value="InterPro"/>
</dbReference>
<dbReference type="GO" id="GO:0042254">
    <property type="term" value="P:ribosome biogenesis"/>
    <property type="evidence" value="ECO:0007669"/>
    <property type="project" value="UniProtKB-UniRule"/>
</dbReference>
<dbReference type="CDD" id="cd01898">
    <property type="entry name" value="Obg"/>
    <property type="match status" value="1"/>
</dbReference>
<dbReference type="FunFam" id="2.70.210.12:FF:000001">
    <property type="entry name" value="GTPase Obg"/>
    <property type="match status" value="1"/>
</dbReference>
<dbReference type="Gene3D" id="3.30.300.350">
    <property type="entry name" value="GTP-binding protein OBG, C-terminal domain"/>
    <property type="match status" value="1"/>
</dbReference>
<dbReference type="Gene3D" id="2.70.210.12">
    <property type="entry name" value="GTP1/OBG domain"/>
    <property type="match status" value="1"/>
</dbReference>
<dbReference type="Gene3D" id="3.40.50.300">
    <property type="entry name" value="P-loop containing nucleotide triphosphate hydrolases"/>
    <property type="match status" value="1"/>
</dbReference>
<dbReference type="HAMAP" id="MF_01454">
    <property type="entry name" value="GTPase_Obg"/>
    <property type="match status" value="1"/>
</dbReference>
<dbReference type="InterPro" id="IPR031167">
    <property type="entry name" value="G_OBG"/>
</dbReference>
<dbReference type="InterPro" id="IPR006073">
    <property type="entry name" value="GTP-bd"/>
</dbReference>
<dbReference type="InterPro" id="IPR014100">
    <property type="entry name" value="GTP-bd_Obg/CgtA"/>
</dbReference>
<dbReference type="InterPro" id="IPR036346">
    <property type="entry name" value="GTP-bd_prot_GTP1/OBG_C_sf"/>
</dbReference>
<dbReference type="InterPro" id="IPR006169">
    <property type="entry name" value="GTP1_OBG_dom"/>
</dbReference>
<dbReference type="InterPro" id="IPR036726">
    <property type="entry name" value="GTP1_OBG_dom_sf"/>
</dbReference>
<dbReference type="InterPro" id="IPR045086">
    <property type="entry name" value="OBG_GTPase"/>
</dbReference>
<dbReference type="InterPro" id="IPR015349">
    <property type="entry name" value="OCT_dom"/>
</dbReference>
<dbReference type="InterPro" id="IPR027417">
    <property type="entry name" value="P-loop_NTPase"/>
</dbReference>
<dbReference type="InterPro" id="IPR005225">
    <property type="entry name" value="Small_GTP-bd"/>
</dbReference>
<dbReference type="NCBIfam" id="TIGR02729">
    <property type="entry name" value="Obg_CgtA"/>
    <property type="match status" value="1"/>
</dbReference>
<dbReference type="NCBIfam" id="TIGR03595">
    <property type="entry name" value="Obg_CgtA_exten"/>
    <property type="match status" value="1"/>
</dbReference>
<dbReference type="NCBIfam" id="NF008954">
    <property type="entry name" value="PRK12296.1"/>
    <property type="match status" value="1"/>
</dbReference>
<dbReference type="NCBIfam" id="NF008955">
    <property type="entry name" value="PRK12297.1"/>
    <property type="match status" value="1"/>
</dbReference>
<dbReference type="NCBIfam" id="NF008956">
    <property type="entry name" value="PRK12299.1"/>
    <property type="match status" value="1"/>
</dbReference>
<dbReference type="NCBIfam" id="TIGR00231">
    <property type="entry name" value="small_GTP"/>
    <property type="match status" value="1"/>
</dbReference>
<dbReference type="PANTHER" id="PTHR11702">
    <property type="entry name" value="DEVELOPMENTALLY REGULATED GTP-BINDING PROTEIN-RELATED"/>
    <property type="match status" value="1"/>
</dbReference>
<dbReference type="PANTHER" id="PTHR11702:SF31">
    <property type="entry name" value="MITOCHONDRIAL RIBOSOME-ASSOCIATED GTPASE 2"/>
    <property type="match status" value="1"/>
</dbReference>
<dbReference type="Pfam" id="PF09269">
    <property type="entry name" value="DUF1967"/>
    <property type="match status" value="1"/>
</dbReference>
<dbReference type="Pfam" id="PF01018">
    <property type="entry name" value="GTP1_OBG"/>
    <property type="match status" value="1"/>
</dbReference>
<dbReference type="Pfam" id="PF01926">
    <property type="entry name" value="MMR_HSR1"/>
    <property type="match status" value="1"/>
</dbReference>
<dbReference type="PRINTS" id="PR00326">
    <property type="entry name" value="GTP1OBG"/>
</dbReference>
<dbReference type="SUPFAM" id="SSF102741">
    <property type="entry name" value="Obg GTP-binding protein C-terminal domain"/>
    <property type="match status" value="1"/>
</dbReference>
<dbReference type="SUPFAM" id="SSF82051">
    <property type="entry name" value="Obg GTP-binding protein N-terminal domain"/>
    <property type="match status" value="1"/>
</dbReference>
<dbReference type="SUPFAM" id="SSF52540">
    <property type="entry name" value="P-loop containing nucleoside triphosphate hydrolases"/>
    <property type="match status" value="1"/>
</dbReference>
<dbReference type="PROSITE" id="PS51710">
    <property type="entry name" value="G_OBG"/>
    <property type="match status" value="1"/>
</dbReference>
<dbReference type="PROSITE" id="PS51883">
    <property type="entry name" value="OBG"/>
    <property type="match status" value="1"/>
</dbReference>
<dbReference type="PROSITE" id="PS51881">
    <property type="entry name" value="OCT"/>
    <property type="match status" value="1"/>
</dbReference>
<sequence length="423" mass="45770">MFYDEAKIYVKGGDGGNGIVAFRREKYVPRGGPNGGDGGRGGSVILEADAGLRTLVDFRYRAHYRAERGQHGQGKNKHGRSAPDLILRVPVGVVVRDATSGQVLADLVEDGQRVVVAAGGRGGRGNARFVTSTDRAPTFAEKGEPGEERWLVLELKLLADVGLIGLPNAGKSTLLARISAARPKIADYPFTTLTPNLGVVRLEDGDSFVVADIPGLIAGAHQGAGLGLKFLRHIERTRVLVHVLDTSQPGEDVLAGWRTVNDELAHYNPELARRPQVVAANKMDIPGGEEKVAFLRERLGDSYRIFPISAATGEGVQELLYHVSGLLATLPPPAPVTAPEEEKVTALAPEELTIEREGQVFIVKNPDVERRVAMTYLDNEEAVRRLQVYLKQKGVDDALRRAGAATGAIIRIGKFEFEYVEEP</sequence>
<gene>
    <name evidence="1" type="primary">obg</name>
    <name type="ordered locus">Moth_0561</name>
</gene>
<proteinExistence type="inferred from homology"/>
<name>OBG_MOOTA</name>
<evidence type="ECO:0000255" key="1">
    <source>
        <dbReference type="HAMAP-Rule" id="MF_01454"/>
    </source>
</evidence>
<evidence type="ECO:0000255" key="2">
    <source>
        <dbReference type="PROSITE-ProRule" id="PRU01229"/>
    </source>
</evidence>
<evidence type="ECO:0000255" key="3">
    <source>
        <dbReference type="PROSITE-ProRule" id="PRU01231"/>
    </source>
</evidence>
<keyword id="KW-0963">Cytoplasm</keyword>
<keyword id="KW-0342">GTP-binding</keyword>
<keyword id="KW-0378">Hydrolase</keyword>
<keyword id="KW-0460">Magnesium</keyword>
<keyword id="KW-0479">Metal-binding</keyword>
<keyword id="KW-0547">Nucleotide-binding</keyword>
<feature type="chain" id="PRO_0000386048" description="GTPase Obg">
    <location>
        <begin position="1"/>
        <end position="423"/>
    </location>
</feature>
<feature type="domain" description="Obg" evidence="3">
    <location>
        <begin position="1"/>
        <end position="158"/>
    </location>
</feature>
<feature type="domain" description="OBG-type G" evidence="1">
    <location>
        <begin position="159"/>
        <end position="328"/>
    </location>
</feature>
<feature type="domain" description="OCT" evidence="2">
    <location>
        <begin position="336"/>
        <end position="421"/>
    </location>
</feature>
<feature type="binding site" evidence="1">
    <location>
        <begin position="165"/>
        <end position="172"/>
    </location>
    <ligand>
        <name>GTP</name>
        <dbReference type="ChEBI" id="CHEBI:37565"/>
    </ligand>
</feature>
<feature type="binding site" evidence="1">
    <location>
        <position position="172"/>
    </location>
    <ligand>
        <name>Mg(2+)</name>
        <dbReference type="ChEBI" id="CHEBI:18420"/>
    </ligand>
</feature>
<feature type="binding site" evidence="1">
    <location>
        <begin position="190"/>
        <end position="194"/>
    </location>
    <ligand>
        <name>GTP</name>
        <dbReference type="ChEBI" id="CHEBI:37565"/>
    </ligand>
</feature>
<feature type="binding site" evidence="1">
    <location>
        <position position="192"/>
    </location>
    <ligand>
        <name>Mg(2+)</name>
        <dbReference type="ChEBI" id="CHEBI:18420"/>
    </ligand>
</feature>
<feature type="binding site" evidence="1">
    <location>
        <begin position="212"/>
        <end position="215"/>
    </location>
    <ligand>
        <name>GTP</name>
        <dbReference type="ChEBI" id="CHEBI:37565"/>
    </ligand>
</feature>
<feature type="binding site" evidence="1">
    <location>
        <begin position="281"/>
        <end position="284"/>
    </location>
    <ligand>
        <name>GTP</name>
        <dbReference type="ChEBI" id="CHEBI:37565"/>
    </ligand>
</feature>
<feature type="binding site" evidence="1">
    <location>
        <begin position="309"/>
        <end position="311"/>
    </location>
    <ligand>
        <name>GTP</name>
        <dbReference type="ChEBI" id="CHEBI:37565"/>
    </ligand>
</feature>
<organism>
    <name type="scientific">Moorella thermoacetica (strain ATCC 39073 / JCM 9320)</name>
    <dbReference type="NCBI Taxonomy" id="264732"/>
    <lineage>
        <taxon>Bacteria</taxon>
        <taxon>Bacillati</taxon>
        <taxon>Bacillota</taxon>
        <taxon>Clostridia</taxon>
        <taxon>Moorellales</taxon>
        <taxon>Moorellaceae</taxon>
        <taxon>Moorella</taxon>
    </lineage>
</organism>
<comment type="function">
    <text evidence="1">An essential GTPase which binds GTP, GDP and possibly (p)ppGpp with moderate affinity, with high nucleotide exchange rates and a fairly low GTP hydrolysis rate. Plays a role in control of the cell cycle, stress response, ribosome biogenesis and in those bacteria that undergo differentiation, in morphogenesis control.</text>
</comment>
<comment type="cofactor">
    <cofactor evidence="1">
        <name>Mg(2+)</name>
        <dbReference type="ChEBI" id="CHEBI:18420"/>
    </cofactor>
</comment>
<comment type="subunit">
    <text evidence="1">Monomer.</text>
</comment>
<comment type="subcellular location">
    <subcellularLocation>
        <location evidence="1">Cytoplasm</location>
    </subcellularLocation>
</comment>
<comment type="similarity">
    <text evidence="1">Belongs to the TRAFAC class OBG-HflX-like GTPase superfamily. OBG GTPase family.</text>
</comment>
<reference key="1">
    <citation type="journal article" date="2008" name="Environ. Microbiol.">
        <title>The complete genome sequence of Moorella thermoacetica (f. Clostridium thermoaceticum).</title>
        <authorList>
            <person name="Pierce E."/>
            <person name="Xie G."/>
            <person name="Barabote R.D."/>
            <person name="Saunders E."/>
            <person name="Han C.S."/>
            <person name="Detter J.C."/>
            <person name="Richardson P."/>
            <person name="Brettin T.S."/>
            <person name="Das A."/>
            <person name="Ljungdahl L.G."/>
            <person name="Ragsdale S.W."/>
        </authorList>
    </citation>
    <scope>NUCLEOTIDE SEQUENCE [LARGE SCALE GENOMIC DNA]</scope>
    <source>
        <strain>ATCC 39073 / JCM 9320</strain>
    </source>
</reference>
<accession>Q2RKZ8</accession>
<protein>
    <recommendedName>
        <fullName evidence="1">GTPase Obg</fullName>
        <ecNumber evidence="1">3.6.5.-</ecNumber>
    </recommendedName>
    <alternativeName>
        <fullName evidence="1">GTP-binding protein Obg</fullName>
    </alternativeName>
</protein>